<accession>A9KM56</accession>
<protein>
    <recommendedName>
        <fullName>3-O-alpha-D-glucosyl-L-rhamnose phosphorylase</fullName>
        <ecNumber>2.4.1.282</ecNumber>
    </recommendedName>
    <alternativeName>
        <fullName>3-O-alpha-D-glucopyranosyl-L-rhamnopyranose:phosphate beta-D-glucosyltransferase</fullName>
    </alternativeName>
</protein>
<name>3OAGR_LACP7</name>
<comment type="function">
    <text evidence="2">Phosphorylase showing strict alpha-1,3-regioselectivity and producing 3-O-alpha-D-glucopyranosyl-L-rhamnopyranose. Specific for L-rhamnose as acceptor and beta-D-glucose 1-phosphate as donor. Does not phosphorylate alpha,alpha-trehalose, kojibiose, nigerose, or maltose.</text>
</comment>
<comment type="catalytic activity">
    <reaction evidence="2">
        <text>3-O-alpha-D-glucosyl-L-rhamnose + phosphate = beta-D-glucose 1-phosphate + L-rhamnopyranose</text>
        <dbReference type="Rhea" id="RHEA:34207"/>
        <dbReference type="ChEBI" id="CHEBI:43474"/>
        <dbReference type="ChEBI" id="CHEBI:57684"/>
        <dbReference type="ChEBI" id="CHEBI:62346"/>
        <dbReference type="ChEBI" id="CHEBI:66909"/>
        <dbReference type="EC" id="2.4.1.282"/>
    </reaction>
</comment>
<comment type="biophysicochemical properties">
    <kinetics>
        <KM evidence="2">2.7 mM for L-rhamnose</KM>
        <KM evidence="2">9.6 mM for beta-D-glucose 1-phosphate</KM>
        <text>kcat is 16 sec(-1) with L-rhamnose. kcat is 2.5 sec(-1) with beta-D-glucose 1-phosphate.</text>
    </kinetics>
    <phDependence>
        <text evidence="2">Optimum pH is 6.5.</text>
    </phDependence>
</comment>
<comment type="subunit">
    <text evidence="2">Monomer.</text>
</comment>
<comment type="subcellular location">
    <subcellularLocation>
        <location evidence="4">Cytoplasm</location>
    </subcellularLocation>
</comment>
<comment type="similarity">
    <text evidence="3">Belongs to the glycosyl hydrolase 65 family.</text>
</comment>
<reference key="1">
    <citation type="submission" date="2007-11" db="EMBL/GenBank/DDBJ databases">
        <title>Complete genome sequence of Clostridium phytofermentans ISDg.</title>
        <authorList>
            <person name="Leschine S.B."/>
            <person name="Warnick T.A."/>
            <person name="Blanchard J.L."/>
            <person name="Schnell D.J."/>
            <person name="Petit E.L."/>
            <person name="LaTouf W.G."/>
            <person name="Copeland A."/>
            <person name="Lucas S."/>
            <person name="Lapidus A."/>
            <person name="Barry K."/>
            <person name="Glavina del Rio T."/>
            <person name="Dalin E."/>
            <person name="Tice H."/>
            <person name="Pitluck S."/>
            <person name="Kiss H."/>
            <person name="Brettin T."/>
            <person name="Bruce D."/>
            <person name="Detter J.C."/>
            <person name="Han C."/>
            <person name="Kuske C."/>
            <person name="Schmutz J."/>
            <person name="Larimer F."/>
            <person name="Land M."/>
            <person name="Hauser L."/>
            <person name="Kyrpides N."/>
            <person name="Kim E.A."/>
            <person name="Richardson P."/>
        </authorList>
    </citation>
    <scope>NUCLEOTIDE SEQUENCE [LARGE SCALE GENOMIC DNA]</scope>
    <source>
        <strain>ATCC 700394 / DSM 18823 / ISDg</strain>
    </source>
</reference>
<reference key="2">
    <citation type="journal article" date="2012" name="Carbohydr. Res.">
        <title>3-O-alpha-D-glucopyranosyl-L-rhamnose phosphorylase from Clostridium phytofermentans.</title>
        <authorList>
            <person name="Nihira T."/>
            <person name="Nakai H."/>
            <person name="Kitaoka M."/>
        </authorList>
    </citation>
    <scope>FUNCTION</scope>
    <scope>CATALYTIC ACTIVITY</scope>
    <scope>SUBUNIT</scope>
    <scope>SUBCELLULAR LOCATION</scope>
    <scope>BIOPHYSICOCHEMICAL PROPERTIES</scope>
    <source>
        <strain>ATCC 700394 / DSM 18823 / ISDg</strain>
    </source>
</reference>
<dbReference type="EC" id="2.4.1.282"/>
<dbReference type="EMBL" id="CP000885">
    <property type="protein sequence ID" value="ABX41399.1"/>
    <property type="molecule type" value="Genomic_DNA"/>
</dbReference>
<dbReference type="RefSeq" id="WP_012199045.1">
    <property type="nucleotide sequence ID" value="NC_010001.1"/>
</dbReference>
<dbReference type="SMR" id="A9KM56"/>
<dbReference type="STRING" id="357809.Cphy_1019"/>
<dbReference type="CAZy" id="GH65">
    <property type="family name" value="Glycoside Hydrolase Family 65"/>
</dbReference>
<dbReference type="KEGG" id="cpy:Cphy_1019"/>
<dbReference type="eggNOG" id="COG1554">
    <property type="taxonomic scope" value="Bacteria"/>
</dbReference>
<dbReference type="HOGENOM" id="CLU_006285_2_1_9"/>
<dbReference type="OrthoDB" id="9758855at2"/>
<dbReference type="BioCyc" id="MetaCyc:MONOMER-17154"/>
<dbReference type="BRENDA" id="2.4.1.282">
    <property type="organism ID" value="10424"/>
</dbReference>
<dbReference type="SABIO-RK" id="A9KM56"/>
<dbReference type="Proteomes" id="UP000000370">
    <property type="component" value="Chromosome"/>
</dbReference>
<dbReference type="GO" id="GO:0005737">
    <property type="term" value="C:cytoplasm"/>
    <property type="evidence" value="ECO:0007669"/>
    <property type="project" value="UniProtKB-SubCell"/>
</dbReference>
<dbReference type="GO" id="GO:0030246">
    <property type="term" value="F:carbohydrate binding"/>
    <property type="evidence" value="ECO:0007669"/>
    <property type="project" value="InterPro"/>
</dbReference>
<dbReference type="GO" id="GO:0016757">
    <property type="term" value="F:glycosyltransferase activity"/>
    <property type="evidence" value="ECO:0007669"/>
    <property type="project" value="UniProtKB-KW"/>
</dbReference>
<dbReference type="GO" id="GO:0004553">
    <property type="term" value="F:hydrolase activity, hydrolyzing O-glycosyl compounds"/>
    <property type="evidence" value="ECO:0007669"/>
    <property type="project" value="TreeGrafter"/>
</dbReference>
<dbReference type="GO" id="GO:0005975">
    <property type="term" value="P:carbohydrate metabolic process"/>
    <property type="evidence" value="ECO:0007669"/>
    <property type="project" value="InterPro"/>
</dbReference>
<dbReference type="Gene3D" id="1.50.10.10">
    <property type="match status" value="1"/>
</dbReference>
<dbReference type="Gene3D" id="2.70.98.40">
    <property type="entry name" value="Glycoside hydrolase, family 65, N-terminal domain"/>
    <property type="match status" value="1"/>
</dbReference>
<dbReference type="Gene3D" id="2.60.420.10">
    <property type="entry name" value="Maltose phosphorylase, domain 3"/>
    <property type="match status" value="1"/>
</dbReference>
<dbReference type="InterPro" id="IPR008928">
    <property type="entry name" value="6-hairpin_glycosidase_sf"/>
</dbReference>
<dbReference type="InterPro" id="IPR012341">
    <property type="entry name" value="6hp_glycosidase-like_sf"/>
</dbReference>
<dbReference type="InterPro" id="IPR011013">
    <property type="entry name" value="Gal_mutarotase_sf_dom"/>
</dbReference>
<dbReference type="InterPro" id="IPR005195">
    <property type="entry name" value="Glyco_hydro_65_M"/>
</dbReference>
<dbReference type="InterPro" id="IPR005196">
    <property type="entry name" value="Glyco_hydro_65_N"/>
</dbReference>
<dbReference type="InterPro" id="IPR037018">
    <property type="entry name" value="Glyco_hydro_65_N_sf"/>
</dbReference>
<dbReference type="InterPro" id="IPR017045">
    <property type="entry name" value="Malt_Pase/Glycosyl_Hdrlase"/>
</dbReference>
<dbReference type="PANTHER" id="PTHR11051">
    <property type="entry name" value="GLYCOSYL HYDROLASE-RELATED"/>
    <property type="match status" value="1"/>
</dbReference>
<dbReference type="PANTHER" id="PTHR11051:SF8">
    <property type="entry name" value="PROTEIN-GLUCOSYLGALACTOSYLHYDROXYLYSINE GLUCOSIDASE"/>
    <property type="match status" value="1"/>
</dbReference>
<dbReference type="Pfam" id="PF03632">
    <property type="entry name" value="Glyco_hydro_65m"/>
    <property type="match status" value="1"/>
</dbReference>
<dbReference type="Pfam" id="PF03636">
    <property type="entry name" value="Glyco_hydro_65N"/>
    <property type="match status" value="1"/>
</dbReference>
<dbReference type="PIRSF" id="PIRSF036289">
    <property type="entry name" value="Glycosyl_hydrolase_malt_phosph"/>
    <property type="match status" value="1"/>
</dbReference>
<dbReference type="SUPFAM" id="SSF74650">
    <property type="entry name" value="Galactose mutarotase-like"/>
    <property type="match status" value="1"/>
</dbReference>
<dbReference type="SUPFAM" id="SSF48208">
    <property type="entry name" value="Six-hairpin glycosidases"/>
    <property type="match status" value="1"/>
</dbReference>
<sequence>MLIHEDNRYIVEKEYNLVTEPQNASLFTTGNGYMGVRGSLEEFGSTRIQGSFIRGFVDEIIEVIEPFCDNEYMKKYYFDEEKLKKFDKQISCINLVDFLLIRFRIGDEIFYPWEGEILSWERRLDTSQSIFQRSVTWKDKMGNITVFEFERFASYDEEHRYCMRAMAKPQNHFLPVEIISGIDTDVRTGGQRVLQFINNQILNNGLISCFQSGKRYGITCKIAVKNSFFMDGKLQHSIGEQQENLLLNKALMPGGGREYCVEKTIYLTTDRDCDPLFDTIDTVLLDVGTYDAYKEAHIREWSQFFSNFDIKILGDDRKDAQLRFATYHAVITGDRNNSIHSLSAKGLTGERYNQFVWWDCEIYQLPIFIHAFPEVAKHALIYRYDRLEEARENAKLEGCKGARYPFVSSLEGKEHVWIYARHPFLQVHITADIGFGIINYFINTLDYEFMELYGFEMLYEICRYWVSKVILKDGTYQLLGVTGTDEHHPYVDNDAYTNYIVQYVLQETILLDSQYSSTKVRDKIGITVNELKDIEQVSRLLYLPLEKSGLIPQFDGYFDLSRDLEVDGSGTGKNFQMKQAGLYHKSQVIKQPDVMLLFSYLNFEIKNSRYEENWDYYEKMCESSSSLTFPVHAICSADANRMLSFLNYFNETVNIDLLDIHHCAWQGVHAGCLSGAWYAIFRGLMGIVTRIDCIQINPKLIPFWQGVELSFIYQTKKIKATLNGNVFTLGSEDKKEISVYFQGKRYAFVDRLEVSF</sequence>
<evidence type="ECO:0000250" key="1">
    <source>
        <dbReference type="UniProtKB" id="D6XZ22"/>
    </source>
</evidence>
<evidence type="ECO:0000269" key="2">
    <source>
    </source>
</evidence>
<evidence type="ECO:0000305" key="3"/>
<evidence type="ECO:0000305" key="4">
    <source>
    </source>
</evidence>
<keyword id="KW-0963">Cytoplasm</keyword>
<keyword id="KW-0328">Glycosyltransferase</keyword>
<keyword id="KW-1185">Reference proteome</keyword>
<keyword id="KW-0808">Transferase</keyword>
<organism>
    <name type="scientific">Lachnoclostridium phytofermentans (strain ATCC 700394 / DSM 18823 / ISDg)</name>
    <name type="common">Clostridium phytofermentans</name>
    <dbReference type="NCBI Taxonomy" id="357809"/>
    <lineage>
        <taxon>Bacteria</taxon>
        <taxon>Bacillati</taxon>
        <taxon>Bacillota</taxon>
        <taxon>Clostridia</taxon>
        <taxon>Lachnospirales</taxon>
        <taxon>Lachnospiraceae</taxon>
    </lineage>
</organism>
<proteinExistence type="evidence at protein level"/>
<gene>
    <name type="ordered locus">Cphy_1019</name>
</gene>
<feature type="chain" id="PRO_0000422596" description="3-O-alpha-D-glucosyl-L-rhamnose phosphorylase">
    <location>
        <begin position="1"/>
        <end position="756"/>
    </location>
</feature>
<feature type="active site" description="Proton donor" evidence="1">
    <location>
        <position position="486"/>
    </location>
</feature>
<feature type="binding site" evidence="1">
    <location>
        <begin position="358"/>
        <end position="359"/>
    </location>
    <ligand>
        <name>substrate</name>
    </ligand>
</feature>
<feature type="binding site" evidence="1">
    <location>
        <begin position="590"/>
        <end position="591"/>
    </location>
    <ligand>
        <name>substrate</name>
    </ligand>
</feature>